<protein>
    <recommendedName>
        <fullName evidence="1">Large ribosomal subunit protein uL11</fullName>
    </recommendedName>
    <alternativeName>
        <fullName evidence="2">50S ribosomal protein L11</fullName>
    </alternativeName>
</protein>
<reference key="1">
    <citation type="journal article" date="2006" name="PLoS Genet.">
        <title>Genome sequence of Rickettsia bellii illuminates the role of amoebae in gene exchanges between intracellular pathogens.</title>
        <authorList>
            <person name="Ogata H."/>
            <person name="La Scola B."/>
            <person name="Audic S."/>
            <person name="Renesto P."/>
            <person name="Blanc G."/>
            <person name="Robert C."/>
            <person name="Fournier P.-E."/>
            <person name="Claverie J.-M."/>
            <person name="Raoult D."/>
        </authorList>
    </citation>
    <scope>NUCLEOTIDE SEQUENCE [LARGE SCALE GENOMIC DNA]</scope>
    <source>
        <strain>RML369-C</strain>
    </source>
</reference>
<sequence>MAQKIEGHINLNVNAGEATAAPPIGSTLGQRKVNIMEFCKAFNAATQSIEKGTPLPTVITIYVDKSFTFIVKTPPASYLIKKYAKVKKGSGATKKEAVVGKITMDDCREIAKLKMPDLNTKDIKAATKIICGSAASMGIEVVGN</sequence>
<comment type="function">
    <text evidence="1">Forms part of the ribosomal stalk which helps the ribosome interact with GTP-bound translation factors.</text>
</comment>
<comment type="subunit">
    <text evidence="1">Part of the ribosomal stalk of the 50S ribosomal subunit. Interacts with L10 and the large rRNA to form the base of the stalk. L10 forms an elongated spine to which L12 dimers bind in a sequential fashion forming a multimeric L10(L12)X complex.</text>
</comment>
<comment type="PTM">
    <text evidence="1">One or more lysine residues are methylated.</text>
</comment>
<comment type="similarity">
    <text evidence="1">Belongs to the universal ribosomal protein uL11 family.</text>
</comment>
<keyword id="KW-0488">Methylation</keyword>
<keyword id="KW-0687">Ribonucleoprotein</keyword>
<keyword id="KW-0689">Ribosomal protein</keyword>
<keyword id="KW-0694">RNA-binding</keyword>
<keyword id="KW-0699">rRNA-binding</keyword>
<gene>
    <name evidence="1" type="primary">rplK</name>
    <name type="ordered locus">RBE_1157</name>
</gene>
<organism>
    <name type="scientific">Rickettsia bellii (strain RML369-C)</name>
    <dbReference type="NCBI Taxonomy" id="336407"/>
    <lineage>
        <taxon>Bacteria</taxon>
        <taxon>Pseudomonadati</taxon>
        <taxon>Pseudomonadota</taxon>
        <taxon>Alphaproteobacteria</taxon>
        <taxon>Rickettsiales</taxon>
        <taxon>Rickettsiaceae</taxon>
        <taxon>Rickettsieae</taxon>
        <taxon>Rickettsia</taxon>
        <taxon>belli group</taxon>
    </lineage>
</organism>
<proteinExistence type="inferred from homology"/>
<evidence type="ECO:0000255" key="1">
    <source>
        <dbReference type="HAMAP-Rule" id="MF_00736"/>
    </source>
</evidence>
<evidence type="ECO:0000305" key="2"/>
<accession>Q1RHC6</accession>
<name>RL11_RICBR</name>
<dbReference type="EMBL" id="CP000087">
    <property type="protein sequence ID" value="ABE05238.1"/>
    <property type="molecule type" value="Genomic_DNA"/>
</dbReference>
<dbReference type="RefSeq" id="WP_011477816.1">
    <property type="nucleotide sequence ID" value="NC_007940.1"/>
</dbReference>
<dbReference type="SMR" id="Q1RHC6"/>
<dbReference type="KEGG" id="rbe:RBE_1157"/>
<dbReference type="eggNOG" id="COG0080">
    <property type="taxonomic scope" value="Bacteria"/>
</dbReference>
<dbReference type="HOGENOM" id="CLU_074237_2_0_5"/>
<dbReference type="OrthoDB" id="9802408at2"/>
<dbReference type="Proteomes" id="UP000001951">
    <property type="component" value="Chromosome"/>
</dbReference>
<dbReference type="GO" id="GO:0022625">
    <property type="term" value="C:cytosolic large ribosomal subunit"/>
    <property type="evidence" value="ECO:0007669"/>
    <property type="project" value="TreeGrafter"/>
</dbReference>
<dbReference type="GO" id="GO:0070180">
    <property type="term" value="F:large ribosomal subunit rRNA binding"/>
    <property type="evidence" value="ECO:0007669"/>
    <property type="project" value="UniProtKB-UniRule"/>
</dbReference>
<dbReference type="GO" id="GO:0003735">
    <property type="term" value="F:structural constituent of ribosome"/>
    <property type="evidence" value="ECO:0007669"/>
    <property type="project" value="InterPro"/>
</dbReference>
<dbReference type="GO" id="GO:0006412">
    <property type="term" value="P:translation"/>
    <property type="evidence" value="ECO:0007669"/>
    <property type="project" value="UniProtKB-UniRule"/>
</dbReference>
<dbReference type="CDD" id="cd00349">
    <property type="entry name" value="Ribosomal_L11"/>
    <property type="match status" value="1"/>
</dbReference>
<dbReference type="FunFam" id="3.30.1550.10:FF:000005">
    <property type="entry name" value="50S ribosomal protein L11"/>
    <property type="match status" value="1"/>
</dbReference>
<dbReference type="Gene3D" id="1.10.10.250">
    <property type="entry name" value="Ribosomal protein L11, C-terminal domain"/>
    <property type="match status" value="1"/>
</dbReference>
<dbReference type="Gene3D" id="3.30.1550.10">
    <property type="entry name" value="Ribosomal protein L11/L12, N-terminal domain"/>
    <property type="match status" value="1"/>
</dbReference>
<dbReference type="HAMAP" id="MF_00736">
    <property type="entry name" value="Ribosomal_uL11"/>
    <property type="match status" value="1"/>
</dbReference>
<dbReference type="InterPro" id="IPR000911">
    <property type="entry name" value="Ribosomal_uL11"/>
</dbReference>
<dbReference type="InterPro" id="IPR006519">
    <property type="entry name" value="Ribosomal_uL11_bac-typ"/>
</dbReference>
<dbReference type="InterPro" id="IPR020783">
    <property type="entry name" value="Ribosomal_uL11_C"/>
</dbReference>
<dbReference type="InterPro" id="IPR036769">
    <property type="entry name" value="Ribosomal_uL11_C_sf"/>
</dbReference>
<dbReference type="InterPro" id="IPR020785">
    <property type="entry name" value="Ribosomal_uL11_CS"/>
</dbReference>
<dbReference type="InterPro" id="IPR020784">
    <property type="entry name" value="Ribosomal_uL11_N"/>
</dbReference>
<dbReference type="InterPro" id="IPR036796">
    <property type="entry name" value="Ribosomal_uL11_N_sf"/>
</dbReference>
<dbReference type="NCBIfam" id="TIGR01632">
    <property type="entry name" value="L11_bact"/>
    <property type="match status" value="1"/>
</dbReference>
<dbReference type="PANTHER" id="PTHR11661">
    <property type="entry name" value="60S RIBOSOMAL PROTEIN L12"/>
    <property type="match status" value="1"/>
</dbReference>
<dbReference type="PANTHER" id="PTHR11661:SF1">
    <property type="entry name" value="LARGE RIBOSOMAL SUBUNIT PROTEIN UL11M"/>
    <property type="match status" value="1"/>
</dbReference>
<dbReference type="Pfam" id="PF00298">
    <property type="entry name" value="Ribosomal_L11"/>
    <property type="match status" value="1"/>
</dbReference>
<dbReference type="Pfam" id="PF03946">
    <property type="entry name" value="Ribosomal_L11_N"/>
    <property type="match status" value="1"/>
</dbReference>
<dbReference type="SMART" id="SM00649">
    <property type="entry name" value="RL11"/>
    <property type="match status" value="1"/>
</dbReference>
<dbReference type="SUPFAM" id="SSF54747">
    <property type="entry name" value="Ribosomal L11/L12e N-terminal domain"/>
    <property type="match status" value="1"/>
</dbReference>
<dbReference type="SUPFAM" id="SSF46906">
    <property type="entry name" value="Ribosomal protein L11, C-terminal domain"/>
    <property type="match status" value="1"/>
</dbReference>
<dbReference type="PROSITE" id="PS00359">
    <property type="entry name" value="RIBOSOMAL_L11"/>
    <property type="match status" value="1"/>
</dbReference>
<feature type="chain" id="PRO_0000258203" description="Large ribosomal subunit protein uL11">
    <location>
        <begin position="1"/>
        <end position="144"/>
    </location>
</feature>